<proteinExistence type="evidence at protein level"/>
<comment type="subcellular location">
    <subcellularLocation>
        <location evidence="4">Cytoplasm</location>
    </subcellularLocation>
    <subcellularLocation>
        <location evidence="4">Endoplasmic reticulum membrane</location>
        <topology evidence="4">Single-pass type I membrane protein</topology>
    </subcellularLocation>
</comment>
<comment type="miscellaneous">
    <text evidence="5">Present with 149 molecules/cell in log phase SD medium.</text>
</comment>
<comment type="similarity">
    <text evidence="6">Belongs to the peptidase A1 family.</text>
</comment>
<organism>
    <name type="scientific">Saccharomyces cerevisiae (strain ATCC 204508 / S288c)</name>
    <name type="common">Baker's yeast</name>
    <dbReference type="NCBI Taxonomy" id="559292"/>
    <lineage>
        <taxon>Eukaryota</taxon>
        <taxon>Fungi</taxon>
        <taxon>Dikarya</taxon>
        <taxon>Ascomycota</taxon>
        <taxon>Saccharomycotina</taxon>
        <taxon>Saccharomycetes</taxon>
        <taxon>Saccharomycetales</taxon>
        <taxon>Saccharomycetaceae</taxon>
        <taxon>Saccharomyces</taxon>
    </lineage>
</organism>
<evidence type="ECO:0000250" key="1"/>
<evidence type="ECO:0000255" key="2"/>
<evidence type="ECO:0000255" key="3">
    <source>
        <dbReference type="PROSITE-ProRule" id="PRU01103"/>
    </source>
</evidence>
<evidence type="ECO:0000269" key="4">
    <source>
    </source>
</evidence>
<evidence type="ECO:0000269" key="5">
    <source>
    </source>
</evidence>
<evidence type="ECO:0000305" key="6"/>
<gene>
    <name type="primary">YPS7</name>
    <name type="ordered locus">YDR349C</name>
</gene>
<protein>
    <recommendedName>
        <fullName>Aspartic proteinase yapsin-7</fullName>
        <ecNumber>3.4.23.-</ecNumber>
    </recommendedName>
</protein>
<name>YPS7_YEAST</name>
<sequence>MTCLILWYLWLISTFQLEFATASTANTTTTAKSGTSSSTEEPFPVLAVGKDGRGNYYVNSTFGTPGQRQRLLVDIIQPYINLVSGTSESHNEYSGVYHKHPSYLMNDSTSSVPVSPGQIYEISFIDGRAVNCTLVTDDMNFTNVSSENSSTALITDLMVTRDNVQFNSGSLSISNVSFFDIQSSNFKTSGLLGLSGKVTNPGNAIDSSQYTEQSYFLSLLKDADIIESSSYSLWLAGDTSTYKTYRDPISNCGKLLLGGVDPSLFTGTLGKFDLIPYVDPVSNAVSVGYPIVPLGPIYIVSNSGQSLNMTSKDFLSPALLDSTSSVSYLPTSTIIQIAVQIAATYVESLDRWLVQCSIADMGVSLGFRLRELTIEIPLRDLLSSTYDTSTNSSMFFSSGQEACFLTLYANTNTGVNILGEAFIKNIYMAMDLEDNTIAIAQAKKVEDDAVTEETNETTASTIIKKIKSGYIPYAKVMNSSNTRNLTLYPSYRSGYMFTVPGQLTAAYSNGVITGAGRSFYDTSRASTSARPSSTQFDSFSVSASEEWSNSTNRTSSASGAGVRLSSPYTFNKDPAGHVTRIASLLLLSIFSILIVL</sequence>
<keyword id="KW-0963">Cytoplasm</keyword>
<keyword id="KW-0256">Endoplasmic reticulum</keyword>
<keyword id="KW-0325">Glycoprotein</keyword>
<keyword id="KW-0378">Hydrolase</keyword>
<keyword id="KW-0472">Membrane</keyword>
<keyword id="KW-0645">Protease</keyword>
<keyword id="KW-1185">Reference proteome</keyword>
<keyword id="KW-0732">Signal</keyword>
<keyword id="KW-0812">Transmembrane</keyword>
<keyword id="KW-1133">Transmembrane helix</keyword>
<accession>Q06325</accession>
<accession>D6VSX9</accession>
<accession>Q66RD4</accession>
<dbReference type="EC" id="3.4.23.-"/>
<dbReference type="EMBL" id="U28372">
    <property type="protein sequence ID" value="AAB64785.1"/>
    <property type="molecule type" value="Genomic_DNA"/>
</dbReference>
<dbReference type="EMBL" id="AY723792">
    <property type="protein sequence ID" value="AAU09709.1"/>
    <property type="molecule type" value="Genomic_DNA"/>
</dbReference>
<dbReference type="EMBL" id="BK006938">
    <property type="protein sequence ID" value="DAA12189.1"/>
    <property type="molecule type" value="Genomic_DNA"/>
</dbReference>
<dbReference type="PIR" id="S61146">
    <property type="entry name" value="S61146"/>
</dbReference>
<dbReference type="RefSeq" id="NP_010636.1">
    <property type="nucleotide sequence ID" value="NM_001180657.1"/>
</dbReference>
<dbReference type="SMR" id="Q06325"/>
<dbReference type="BioGRID" id="32405">
    <property type="interactions" value="81"/>
</dbReference>
<dbReference type="DIP" id="DIP-5244N"/>
<dbReference type="FunCoup" id="Q06325">
    <property type="interactions" value="24"/>
</dbReference>
<dbReference type="IntAct" id="Q06325">
    <property type="interactions" value="3"/>
</dbReference>
<dbReference type="STRING" id="4932.YDR349C"/>
<dbReference type="MEROPS" id="A01.097"/>
<dbReference type="GlyCosmos" id="Q06325">
    <property type="glycosylation" value="15 sites, No reported glycans"/>
</dbReference>
<dbReference type="GlyGen" id="Q06325">
    <property type="glycosylation" value="15 sites"/>
</dbReference>
<dbReference type="PaxDb" id="4932-YDR349C"/>
<dbReference type="PeptideAtlas" id="Q06325"/>
<dbReference type="EnsemblFungi" id="YDR349C_mRNA">
    <property type="protein sequence ID" value="YDR349C"/>
    <property type="gene ID" value="YDR349C"/>
</dbReference>
<dbReference type="GeneID" id="851950"/>
<dbReference type="KEGG" id="sce:YDR349C"/>
<dbReference type="AGR" id="SGD:S000002757"/>
<dbReference type="SGD" id="S000002757">
    <property type="gene designation" value="YPS7"/>
</dbReference>
<dbReference type="VEuPathDB" id="FungiDB:YDR349C"/>
<dbReference type="eggNOG" id="KOG1339">
    <property type="taxonomic scope" value="Eukaryota"/>
</dbReference>
<dbReference type="GeneTree" id="ENSGT00940000166661"/>
<dbReference type="HOGENOM" id="CLU_023427_0_0_1"/>
<dbReference type="InParanoid" id="Q06325"/>
<dbReference type="OMA" id="KNIYMAM"/>
<dbReference type="OrthoDB" id="771136at2759"/>
<dbReference type="BioCyc" id="YEAST:G3O-29903-MONOMER"/>
<dbReference type="BioGRID-ORCS" id="851950">
    <property type="hits" value="1 hit in 10 CRISPR screens"/>
</dbReference>
<dbReference type="PRO" id="PR:Q06325"/>
<dbReference type="Proteomes" id="UP000002311">
    <property type="component" value="Chromosome IV"/>
</dbReference>
<dbReference type="RNAct" id="Q06325">
    <property type="molecule type" value="protein"/>
</dbReference>
<dbReference type="GO" id="GO:0005737">
    <property type="term" value="C:cytoplasm"/>
    <property type="evidence" value="ECO:0007005"/>
    <property type="project" value="SGD"/>
</dbReference>
<dbReference type="GO" id="GO:0005783">
    <property type="term" value="C:endoplasmic reticulum"/>
    <property type="evidence" value="ECO:0007005"/>
    <property type="project" value="SGD"/>
</dbReference>
<dbReference type="GO" id="GO:0005789">
    <property type="term" value="C:endoplasmic reticulum membrane"/>
    <property type="evidence" value="ECO:0007669"/>
    <property type="project" value="UniProtKB-SubCell"/>
</dbReference>
<dbReference type="GO" id="GO:0005576">
    <property type="term" value="C:extracellular region"/>
    <property type="evidence" value="ECO:0000318"/>
    <property type="project" value="GO_Central"/>
</dbReference>
<dbReference type="GO" id="GO:0009277">
    <property type="term" value="C:fungal-type cell wall"/>
    <property type="evidence" value="ECO:0000318"/>
    <property type="project" value="GO_Central"/>
</dbReference>
<dbReference type="GO" id="GO:0004190">
    <property type="term" value="F:aspartic-type endopeptidase activity"/>
    <property type="evidence" value="ECO:0000250"/>
    <property type="project" value="SGD"/>
</dbReference>
<dbReference type="GO" id="GO:0031505">
    <property type="term" value="P:fungal-type cell wall organization"/>
    <property type="evidence" value="ECO:0000316"/>
    <property type="project" value="SGD"/>
</dbReference>
<dbReference type="GO" id="GO:0006508">
    <property type="term" value="P:proteolysis"/>
    <property type="evidence" value="ECO:0007669"/>
    <property type="project" value="UniProtKB-KW"/>
</dbReference>
<dbReference type="FunFam" id="2.40.70.10:FF:000110">
    <property type="entry name" value="Yps7p"/>
    <property type="match status" value="1"/>
</dbReference>
<dbReference type="Gene3D" id="2.40.70.10">
    <property type="entry name" value="Acid Proteases"/>
    <property type="match status" value="2"/>
</dbReference>
<dbReference type="InterPro" id="IPR001461">
    <property type="entry name" value="Aspartic_peptidase_A1"/>
</dbReference>
<dbReference type="InterPro" id="IPR033121">
    <property type="entry name" value="PEPTIDASE_A1"/>
</dbReference>
<dbReference type="InterPro" id="IPR021109">
    <property type="entry name" value="Peptidase_aspartic_dom_sf"/>
</dbReference>
<dbReference type="PANTHER" id="PTHR47966">
    <property type="entry name" value="BETA-SITE APP-CLEAVING ENZYME, ISOFORM A-RELATED"/>
    <property type="match status" value="1"/>
</dbReference>
<dbReference type="PANTHER" id="PTHR47966:SF51">
    <property type="entry name" value="BETA-SITE APP-CLEAVING ENZYME, ISOFORM A-RELATED"/>
    <property type="match status" value="1"/>
</dbReference>
<dbReference type="Pfam" id="PF00026">
    <property type="entry name" value="Asp"/>
    <property type="match status" value="1"/>
</dbReference>
<dbReference type="PRINTS" id="PR00792">
    <property type="entry name" value="PEPSIN"/>
</dbReference>
<dbReference type="SUPFAM" id="SSF50630">
    <property type="entry name" value="Acid proteases"/>
    <property type="match status" value="1"/>
</dbReference>
<dbReference type="PROSITE" id="PS51767">
    <property type="entry name" value="PEPTIDASE_A1"/>
    <property type="match status" value="1"/>
</dbReference>
<reference key="1">
    <citation type="journal article" date="1997" name="Nature">
        <title>The nucleotide sequence of Saccharomyces cerevisiae chromosome IV.</title>
        <authorList>
            <person name="Jacq C."/>
            <person name="Alt-Moerbe J."/>
            <person name="Andre B."/>
            <person name="Arnold W."/>
            <person name="Bahr A."/>
            <person name="Ballesta J.P.G."/>
            <person name="Bargues M."/>
            <person name="Baron L."/>
            <person name="Becker A."/>
            <person name="Biteau N."/>
            <person name="Bloecker H."/>
            <person name="Blugeon C."/>
            <person name="Boskovic J."/>
            <person name="Brandt P."/>
            <person name="Brueckner M."/>
            <person name="Buitrago M.J."/>
            <person name="Coster F."/>
            <person name="Delaveau T."/>
            <person name="del Rey F."/>
            <person name="Dujon B."/>
            <person name="Eide L.G."/>
            <person name="Garcia-Cantalejo J.M."/>
            <person name="Goffeau A."/>
            <person name="Gomez-Peris A."/>
            <person name="Granotier C."/>
            <person name="Hanemann V."/>
            <person name="Hankeln T."/>
            <person name="Hoheisel J.D."/>
            <person name="Jaeger W."/>
            <person name="Jimenez A."/>
            <person name="Jonniaux J.-L."/>
            <person name="Kraemer C."/>
            <person name="Kuester H."/>
            <person name="Laamanen P."/>
            <person name="Legros Y."/>
            <person name="Louis E.J."/>
            <person name="Moeller-Rieker S."/>
            <person name="Monnet A."/>
            <person name="Moro M."/>
            <person name="Mueller-Auer S."/>
            <person name="Nussbaumer B."/>
            <person name="Paricio N."/>
            <person name="Paulin L."/>
            <person name="Perea J."/>
            <person name="Perez-Alonso M."/>
            <person name="Perez-Ortin J.E."/>
            <person name="Pohl T.M."/>
            <person name="Prydz H."/>
            <person name="Purnelle B."/>
            <person name="Rasmussen S.W."/>
            <person name="Remacha M.A."/>
            <person name="Revuelta J.L."/>
            <person name="Rieger M."/>
            <person name="Salom D."/>
            <person name="Saluz H.P."/>
            <person name="Saiz J.E."/>
            <person name="Saren A.-M."/>
            <person name="Schaefer M."/>
            <person name="Scharfe M."/>
            <person name="Schmidt E.R."/>
            <person name="Schneider C."/>
            <person name="Scholler P."/>
            <person name="Schwarz S."/>
            <person name="Soler-Mira A."/>
            <person name="Urrestarazu L.A."/>
            <person name="Verhasselt P."/>
            <person name="Vissers S."/>
            <person name="Voet M."/>
            <person name="Volckaert G."/>
            <person name="Wagner G."/>
            <person name="Wambutt R."/>
            <person name="Wedler E."/>
            <person name="Wedler H."/>
            <person name="Woelfl S."/>
            <person name="Harris D.E."/>
            <person name="Bowman S."/>
            <person name="Brown D."/>
            <person name="Churcher C.M."/>
            <person name="Connor R."/>
            <person name="Dedman K."/>
            <person name="Gentles S."/>
            <person name="Hamlin N."/>
            <person name="Hunt S."/>
            <person name="Jones L."/>
            <person name="McDonald S."/>
            <person name="Murphy L.D."/>
            <person name="Niblett D."/>
            <person name="Odell C."/>
            <person name="Oliver K."/>
            <person name="Rajandream M.A."/>
            <person name="Richards C."/>
            <person name="Shore L."/>
            <person name="Walsh S.V."/>
            <person name="Barrell B.G."/>
            <person name="Dietrich F.S."/>
            <person name="Mulligan J.T."/>
            <person name="Allen E."/>
            <person name="Araujo R."/>
            <person name="Aviles E."/>
            <person name="Berno A."/>
            <person name="Carpenter J."/>
            <person name="Chen E."/>
            <person name="Cherry J.M."/>
            <person name="Chung E."/>
            <person name="Duncan M."/>
            <person name="Hunicke-Smith S."/>
            <person name="Hyman R.W."/>
            <person name="Komp C."/>
            <person name="Lashkari D."/>
            <person name="Lew H."/>
            <person name="Lin D."/>
            <person name="Mosedale D."/>
            <person name="Nakahara K."/>
            <person name="Namath A."/>
            <person name="Oefner P."/>
            <person name="Oh C."/>
            <person name="Petel F.X."/>
            <person name="Roberts D."/>
            <person name="Schramm S."/>
            <person name="Schroeder M."/>
            <person name="Shogren T."/>
            <person name="Shroff N."/>
            <person name="Winant A."/>
            <person name="Yelton M.A."/>
            <person name="Botstein D."/>
            <person name="Davis R.W."/>
            <person name="Johnston M."/>
            <person name="Andrews S."/>
            <person name="Brinkman R."/>
            <person name="Cooper J."/>
            <person name="Ding H."/>
            <person name="Du Z."/>
            <person name="Favello A."/>
            <person name="Fulton L."/>
            <person name="Gattung S."/>
            <person name="Greco T."/>
            <person name="Hallsworth K."/>
            <person name="Hawkins J."/>
            <person name="Hillier L.W."/>
            <person name="Jier M."/>
            <person name="Johnson D."/>
            <person name="Johnston L."/>
            <person name="Kirsten J."/>
            <person name="Kucaba T."/>
            <person name="Langston Y."/>
            <person name="Latreille P."/>
            <person name="Le T."/>
            <person name="Mardis E."/>
            <person name="Menezes S."/>
            <person name="Miller N."/>
            <person name="Nhan M."/>
            <person name="Pauley A."/>
            <person name="Peluso D."/>
            <person name="Rifkin L."/>
            <person name="Riles L."/>
            <person name="Taich A."/>
            <person name="Trevaskis E."/>
            <person name="Vignati D."/>
            <person name="Wilcox L."/>
            <person name="Wohldman P."/>
            <person name="Vaudin M."/>
            <person name="Wilson R."/>
            <person name="Waterston R."/>
            <person name="Albermann K."/>
            <person name="Hani J."/>
            <person name="Heumann K."/>
            <person name="Kleine K."/>
            <person name="Mewes H.-W."/>
            <person name="Zollner A."/>
            <person name="Zaccaria P."/>
        </authorList>
    </citation>
    <scope>NUCLEOTIDE SEQUENCE [LARGE SCALE GENOMIC DNA]</scope>
    <source>
        <strain>ATCC 204508 / S288c</strain>
    </source>
</reference>
<reference key="2">
    <citation type="journal article" date="2014" name="G3 (Bethesda)">
        <title>The reference genome sequence of Saccharomyces cerevisiae: Then and now.</title>
        <authorList>
            <person name="Engel S.R."/>
            <person name="Dietrich F.S."/>
            <person name="Fisk D.G."/>
            <person name="Binkley G."/>
            <person name="Balakrishnan R."/>
            <person name="Costanzo M.C."/>
            <person name="Dwight S.S."/>
            <person name="Hitz B.C."/>
            <person name="Karra K."/>
            <person name="Nash R.S."/>
            <person name="Weng S."/>
            <person name="Wong E.D."/>
            <person name="Lloyd P."/>
            <person name="Skrzypek M.S."/>
            <person name="Miyasato S.R."/>
            <person name="Simison M."/>
            <person name="Cherry J.M."/>
        </authorList>
    </citation>
    <scope>GENOME REANNOTATION</scope>
    <source>
        <strain>ATCC 204508 / S288c</strain>
    </source>
</reference>
<reference key="3">
    <citation type="journal article" date="2007" name="Genome Res.">
        <title>Approaching a complete repository of sequence-verified protein-encoding clones for Saccharomyces cerevisiae.</title>
        <authorList>
            <person name="Hu Y."/>
            <person name="Rolfs A."/>
            <person name="Bhullar B."/>
            <person name="Murthy T.V.S."/>
            <person name="Zhu C."/>
            <person name="Berger M.F."/>
            <person name="Camargo A.A."/>
            <person name="Kelley F."/>
            <person name="McCarron S."/>
            <person name="Jepson D."/>
            <person name="Richardson A."/>
            <person name="Raphael J."/>
            <person name="Moreira D."/>
            <person name="Taycher E."/>
            <person name="Zuo D."/>
            <person name="Mohr S."/>
            <person name="Kane M.F."/>
            <person name="Williamson J."/>
            <person name="Simpson A.J.G."/>
            <person name="Bulyk M.L."/>
            <person name="Harlow E."/>
            <person name="Marsischky G."/>
            <person name="Kolodner R.D."/>
            <person name="LaBaer J."/>
        </authorList>
    </citation>
    <scope>NUCLEOTIDE SEQUENCE [GENOMIC DNA]</scope>
    <source>
        <strain>ATCC 204508 / S288c</strain>
    </source>
</reference>
<reference key="4">
    <citation type="journal article" date="2003" name="Nature">
        <title>Global analysis of protein localization in budding yeast.</title>
        <authorList>
            <person name="Huh W.-K."/>
            <person name="Falvo J.V."/>
            <person name="Gerke L.C."/>
            <person name="Carroll A.S."/>
            <person name="Howson R.W."/>
            <person name="Weissman J.S."/>
            <person name="O'Shea E.K."/>
        </authorList>
    </citation>
    <scope>SUBCELLULAR LOCATION [LARGE SCALE ANALYSIS]</scope>
</reference>
<reference key="5">
    <citation type="journal article" date="2003" name="Nature">
        <title>Global analysis of protein expression in yeast.</title>
        <authorList>
            <person name="Ghaemmaghami S."/>
            <person name="Huh W.-K."/>
            <person name="Bower K."/>
            <person name="Howson R.W."/>
            <person name="Belle A."/>
            <person name="Dephoure N."/>
            <person name="O'Shea E.K."/>
            <person name="Weissman J.S."/>
        </authorList>
    </citation>
    <scope>LEVEL OF PROTEIN EXPRESSION [LARGE SCALE ANALYSIS]</scope>
</reference>
<reference key="6">
    <citation type="journal article" date="2005" name="Eukaryot. Cell">
        <title>Yapsins are a family of aspartyl proteases required for cell wall integrity in Saccharomyces cerevisiae.</title>
        <authorList>
            <person name="Krysan D.J."/>
            <person name="Ting E.L."/>
            <person name="Abeijon C."/>
            <person name="Kroos L."/>
            <person name="Fuller R.S."/>
        </authorList>
    </citation>
    <scope>IDENTIFICATION</scope>
</reference>
<feature type="signal peptide" evidence="2">
    <location>
        <begin position="1"/>
        <end position="25"/>
    </location>
</feature>
<feature type="chain" id="PRO_0000270564" description="Aspartic proteinase yapsin-7">
    <location>
        <begin position="26"/>
        <end position="596"/>
    </location>
</feature>
<feature type="topological domain" description="Lumenal" evidence="2">
    <location>
        <begin position="26"/>
        <end position="575"/>
    </location>
</feature>
<feature type="transmembrane region" description="Helical" evidence="2">
    <location>
        <begin position="576"/>
        <end position="596"/>
    </location>
</feature>
<feature type="domain" description="Peptidase A1" evidence="3">
    <location>
        <begin position="56"/>
        <end position="440"/>
    </location>
</feature>
<feature type="active site" evidence="1">
    <location>
        <position position="74"/>
    </location>
</feature>
<feature type="active site" evidence="1">
    <location>
        <position position="321"/>
    </location>
</feature>
<feature type="glycosylation site" description="N-linked (GlcNAc...) asparagine" evidence="2">
    <location>
        <position position="26"/>
    </location>
</feature>
<feature type="glycosylation site" description="N-linked (GlcNAc...) asparagine" evidence="2">
    <location>
        <position position="59"/>
    </location>
</feature>
<feature type="glycosylation site" description="N-linked (GlcNAc...) asparagine" evidence="2">
    <location>
        <position position="106"/>
    </location>
</feature>
<feature type="glycosylation site" description="N-linked (GlcNAc...) asparagine" evidence="2">
    <location>
        <position position="131"/>
    </location>
</feature>
<feature type="glycosylation site" description="N-linked (GlcNAc...) asparagine" evidence="2">
    <location>
        <position position="140"/>
    </location>
</feature>
<feature type="glycosylation site" description="N-linked (GlcNAc...) asparagine" evidence="2">
    <location>
        <position position="143"/>
    </location>
</feature>
<feature type="glycosylation site" description="N-linked (GlcNAc...) asparagine" evidence="2">
    <location>
        <position position="148"/>
    </location>
</feature>
<feature type="glycosylation site" description="N-linked (GlcNAc...) asparagine" evidence="2">
    <location>
        <position position="175"/>
    </location>
</feature>
<feature type="glycosylation site" description="N-linked (GlcNAc...) asparagine" evidence="2">
    <location>
        <position position="308"/>
    </location>
</feature>
<feature type="glycosylation site" description="N-linked (GlcNAc...) asparagine" evidence="2">
    <location>
        <position position="391"/>
    </location>
</feature>
<feature type="glycosylation site" description="N-linked (GlcNAc...) asparagine" evidence="2">
    <location>
        <position position="455"/>
    </location>
</feature>
<feature type="glycosylation site" description="N-linked (GlcNAc...) asparagine" evidence="2">
    <location>
        <position position="478"/>
    </location>
</feature>
<feature type="glycosylation site" description="N-linked (GlcNAc...) asparagine" evidence="2">
    <location>
        <position position="484"/>
    </location>
</feature>
<feature type="glycosylation site" description="N-linked (GlcNAc...) asparagine" evidence="2">
    <location>
        <position position="549"/>
    </location>
</feature>
<feature type="glycosylation site" description="N-linked (GlcNAc...) asparagine" evidence="2">
    <location>
        <position position="552"/>
    </location>
</feature>
<feature type="sequence conflict" description="In Ref. 3; AAU09709." evidence="6" ref="3">
    <original>I</original>
    <variation>V</variation>
    <location>
        <position position="299"/>
    </location>
</feature>